<reference key="1">
    <citation type="journal article" date="2013" name="J. Pept. Sci.">
        <title>Structural and functional characterization of peptides derived from the carboxy-terminal region of a defensin from the tick Ornithodoros savignyi.</title>
        <authorList>
            <person name="Prinsloo L."/>
            <person name="Naidoo A."/>
            <person name="Serem J."/>
            <person name="Taute H."/>
            <person name="Sayed Y."/>
            <person name="Bester M."/>
            <person name="Neitz A."/>
            <person name="Gaspar A."/>
        </authorList>
    </citation>
    <scope>PROTEIN SEQUENCE</scope>
    <scope>FUNCTION</scope>
    <scope>SUBCELLULAR LOCATION</scope>
    <scope>SYNTHESIS OF 16-37</scope>
</reference>
<name>DEF2_ORNSA</name>
<proteinExistence type="evidence at protein level"/>
<feature type="chain" id="PRO_0000455161" description="Tick defensin 2" evidence="2">
    <location>
        <begin position="1"/>
        <end position="37"/>
    </location>
</feature>
<feature type="disulfide bond" evidence="1">
    <location>
        <begin position="4"/>
        <end position="26"/>
    </location>
</feature>
<feature type="disulfide bond" evidence="1">
    <location>
        <begin position="11"/>
        <end position="34"/>
    </location>
</feature>
<feature type="disulfide bond" evidence="1">
    <location>
        <begin position="15"/>
        <end position="36"/>
    </location>
</feature>
<sequence length="37" mass="4186">GYGCPFNQYQCHSHCKGIRGYKGGYCKGAFKQTCKCY</sequence>
<protein>
    <recommendedName>
        <fullName evidence="3">Tick defensin 2</fullName>
    </recommendedName>
    <alternativeName>
        <fullName evidence="3">OsDef2</fullName>
    </alternativeName>
</protein>
<accession>P0DV61</accession>
<organism>
    <name type="scientific">Ornithodoros savignyi</name>
    <name type="common">African eyed tampan</name>
    <name type="synonym">Soft tick</name>
    <dbReference type="NCBI Taxonomy" id="69826"/>
    <lineage>
        <taxon>Eukaryota</taxon>
        <taxon>Metazoa</taxon>
        <taxon>Ecdysozoa</taxon>
        <taxon>Arthropoda</taxon>
        <taxon>Chelicerata</taxon>
        <taxon>Arachnida</taxon>
        <taxon>Acari</taxon>
        <taxon>Parasitiformes</taxon>
        <taxon>Ixodida</taxon>
        <taxon>Ixodoidea</taxon>
        <taxon>Argasidae</taxon>
        <taxon>Ornithodorinae</taxon>
        <taxon>Ornithodoros</taxon>
    </lineage>
</organism>
<comment type="function">
    <text evidence="2">Antibacterial peptide mostly active against Gram-positive bacteria (MIC=0.24 ug/ml on Bacillus subtilis, and MIC=0.94 ug/ml on Micrococcus luteus, MIC&gt;120 ug/ml on both Escherichia coli and Pseudomonas aeruginosa).</text>
</comment>
<comment type="subcellular location">
    <subcellularLocation>
        <location evidence="2">Secreted</location>
    </subcellularLocation>
</comment>
<comment type="miscellaneous">
    <text evidence="2">Two peptides derived from the C-terminal region have been synthesized. The peptide Os consist of residues 16-37, while the peptide Os-C is an analog in which the three cysteine residues are omitted. Both peptides show potent bactericidal activity, and high antioxidant activity.</text>
</comment>
<comment type="similarity">
    <text evidence="4">Belongs to the invertebrate defensin family.</text>
</comment>
<dbReference type="SMR" id="P0DV61"/>
<dbReference type="GO" id="GO:0005576">
    <property type="term" value="C:extracellular region"/>
    <property type="evidence" value="ECO:0007669"/>
    <property type="project" value="UniProtKB-SubCell"/>
</dbReference>
<dbReference type="GO" id="GO:0042742">
    <property type="term" value="P:defense response to bacterium"/>
    <property type="evidence" value="ECO:0007669"/>
    <property type="project" value="UniProtKB-KW"/>
</dbReference>
<dbReference type="GO" id="GO:0045087">
    <property type="term" value="P:innate immune response"/>
    <property type="evidence" value="ECO:0007669"/>
    <property type="project" value="UniProtKB-KW"/>
</dbReference>
<dbReference type="Gene3D" id="3.30.30.10">
    <property type="entry name" value="Knottin, scorpion toxin-like"/>
    <property type="match status" value="1"/>
</dbReference>
<dbReference type="InterPro" id="IPR001542">
    <property type="entry name" value="Defensin_invertebrate/fungal"/>
</dbReference>
<dbReference type="InterPro" id="IPR036574">
    <property type="entry name" value="Scorpion_toxin-like_sf"/>
</dbReference>
<dbReference type="Pfam" id="PF01097">
    <property type="entry name" value="Defensin_2"/>
    <property type="match status" value="1"/>
</dbReference>
<dbReference type="SUPFAM" id="SSF57095">
    <property type="entry name" value="Scorpion toxin-like"/>
    <property type="match status" value="1"/>
</dbReference>
<dbReference type="PROSITE" id="PS51378">
    <property type="entry name" value="INVERT_DEFENSINS"/>
    <property type="match status" value="1"/>
</dbReference>
<evidence type="ECO:0000250" key="1">
    <source>
        <dbReference type="UniProtKB" id="I1T3C7"/>
    </source>
</evidence>
<evidence type="ECO:0000269" key="2">
    <source>
    </source>
</evidence>
<evidence type="ECO:0000303" key="3">
    <source>
    </source>
</evidence>
<evidence type="ECO:0000305" key="4"/>
<keyword id="KW-0044">Antibiotic</keyword>
<keyword id="KW-0929">Antimicrobial</keyword>
<keyword id="KW-0211">Defensin</keyword>
<keyword id="KW-0903">Direct protein sequencing</keyword>
<keyword id="KW-1015">Disulfide bond</keyword>
<keyword id="KW-0391">Immunity</keyword>
<keyword id="KW-0399">Innate immunity</keyword>
<keyword id="KW-0964">Secreted</keyword>